<keyword id="KW-0106">Calcium</keyword>
<keyword id="KW-0963">Cytoplasm</keyword>
<keyword id="KW-0221">Differentiation</keyword>
<keyword id="KW-1015">Disulfide bond</keyword>
<keyword id="KW-0245">EGF-like domain</keyword>
<keyword id="KW-0325">Glycoprotein</keyword>
<keyword id="KW-0479">Metal-binding</keyword>
<keyword id="KW-0539">Nucleus</keyword>
<keyword id="KW-1185">Reference proteome</keyword>
<keyword id="KW-0677">Repeat</keyword>
<keyword id="KW-0964">Secreted</keyword>
<keyword id="KW-0732">Signal</keyword>
<reference key="1">
    <citation type="journal article" date="1999" name="Biochem. Biophys. Res. Commun.">
        <title>Biochemical characterization and expression analysis of neural thrombospondin-1-like proteins NELL1 and NELL2.</title>
        <authorList>
            <person name="Kuroda S."/>
            <person name="Oyasu M."/>
            <person name="Kawakami M."/>
            <person name="Kanayama N."/>
            <person name="Tanizawa K."/>
            <person name="Saito N."/>
            <person name="Abe T."/>
            <person name="Matsuhashi S."/>
            <person name="Ting K."/>
        </authorList>
    </citation>
    <scope>NUCLEOTIDE SEQUENCE [MRNA]</scope>
    <scope>SUBCELLULAR LOCATION</scope>
    <scope>SUBUNIT</scope>
    <source>
        <strain>Sprague-Dawley</strain>
        <tissue>Brain</tissue>
    </source>
</reference>
<reference key="2">
    <citation type="journal article" date="2004" name="Nature">
        <title>Genome sequence of the Brown Norway rat yields insights into mammalian evolution.</title>
        <authorList>
            <person name="Gibbs R.A."/>
            <person name="Weinstock G.M."/>
            <person name="Metzker M.L."/>
            <person name="Muzny D.M."/>
            <person name="Sodergren E.J."/>
            <person name="Scherer S."/>
            <person name="Scott G."/>
            <person name="Steffen D."/>
            <person name="Worley K.C."/>
            <person name="Burch P.E."/>
            <person name="Okwuonu G."/>
            <person name="Hines S."/>
            <person name="Lewis L."/>
            <person name="Deramo C."/>
            <person name="Delgado O."/>
            <person name="Dugan-Rocha S."/>
            <person name="Miner G."/>
            <person name="Morgan M."/>
            <person name="Hawes A."/>
            <person name="Gill R."/>
            <person name="Holt R.A."/>
            <person name="Adams M.D."/>
            <person name="Amanatides P.G."/>
            <person name="Baden-Tillson H."/>
            <person name="Barnstead M."/>
            <person name="Chin S."/>
            <person name="Evans C.A."/>
            <person name="Ferriera S."/>
            <person name="Fosler C."/>
            <person name="Glodek A."/>
            <person name="Gu Z."/>
            <person name="Jennings D."/>
            <person name="Kraft C.L."/>
            <person name="Nguyen T."/>
            <person name="Pfannkoch C.M."/>
            <person name="Sitter C."/>
            <person name="Sutton G.G."/>
            <person name="Venter J.C."/>
            <person name="Woodage T."/>
            <person name="Smith D."/>
            <person name="Lee H.-M."/>
            <person name="Gustafson E."/>
            <person name="Cahill P."/>
            <person name="Kana A."/>
            <person name="Doucette-Stamm L."/>
            <person name="Weinstock K."/>
            <person name="Fechtel K."/>
            <person name="Weiss R.B."/>
            <person name="Dunn D.M."/>
            <person name="Green E.D."/>
            <person name="Blakesley R.W."/>
            <person name="Bouffard G.G."/>
            <person name="De Jong P.J."/>
            <person name="Osoegawa K."/>
            <person name="Zhu B."/>
            <person name="Marra M."/>
            <person name="Schein J."/>
            <person name="Bosdet I."/>
            <person name="Fjell C."/>
            <person name="Jones S."/>
            <person name="Krzywinski M."/>
            <person name="Mathewson C."/>
            <person name="Siddiqui A."/>
            <person name="Wye N."/>
            <person name="McPherson J."/>
            <person name="Zhao S."/>
            <person name="Fraser C.M."/>
            <person name="Shetty J."/>
            <person name="Shatsman S."/>
            <person name="Geer K."/>
            <person name="Chen Y."/>
            <person name="Abramzon S."/>
            <person name="Nierman W.C."/>
            <person name="Havlak P.H."/>
            <person name="Chen R."/>
            <person name="Durbin K.J."/>
            <person name="Egan A."/>
            <person name="Ren Y."/>
            <person name="Song X.-Z."/>
            <person name="Li B."/>
            <person name="Liu Y."/>
            <person name="Qin X."/>
            <person name="Cawley S."/>
            <person name="Cooney A.J."/>
            <person name="D'Souza L.M."/>
            <person name="Martin K."/>
            <person name="Wu J.Q."/>
            <person name="Gonzalez-Garay M.L."/>
            <person name="Jackson A.R."/>
            <person name="Kalafus K.J."/>
            <person name="McLeod M.P."/>
            <person name="Milosavljevic A."/>
            <person name="Virk D."/>
            <person name="Volkov A."/>
            <person name="Wheeler D.A."/>
            <person name="Zhang Z."/>
            <person name="Bailey J.A."/>
            <person name="Eichler E.E."/>
            <person name="Tuzun E."/>
            <person name="Birney E."/>
            <person name="Mongin E."/>
            <person name="Ureta-Vidal A."/>
            <person name="Woodwark C."/>
            <person name="Zdobnov E."/>
            <person name="Bork P."/>
            <person name="Suyama M."/>
            <person name="Torrents D."/>
            <person name="Alexandersson M."/>
            <person name="Trask B.J."/>
            <person name="Young J.M."/>
            <person name="Huang H."/>
            <person name="Wang H."/>
            <person name="Xing H."/>
            <person name="Daniels S."/>
            <person name="Gietzen D."/>
            <person name="Schmidt J."/>
            <person name="Stevens K."/>
            <person name="Vitt U."/>
            <person name="Wingrove J."/>
            <person name="Camara F."/>
            <person name="Mar Alba M."/>
            <person name="Abril J.F."/>
            <person name="Guigo R."/>
            <person name="Smit A."/>
            <person name="Dubchak I."/>
            <person name="Rubin E.M."/>
            <person name="Couronne O."/>
            <person name="Poliakov A."/>
            <person name="Huebner N."/>
            <person name="Ganten D."/>
            <person name="Goesele C."/>
            <person name="Hummel O."/>
            <person name="Kreitler T."/>
            <person name="Lee Y.-A."/>
            <person name="Monti J."/>
            <person name="Schulz H."/>
            <person name="Zimdahl H."/>
            <person name="Himmelbauer H."/>
            <person name="Lehrach H."/>
            <person name="Jacob H.J."/>
            <person name="Bromberg S."/>
            <person name="Gullings-Handley J."/>
            <person name="Jensen-Seaman M.I."/>
            <person name="Kwitek A.E."/>
            <person name="Lazar J."/>
            <person name="Pasko D."/>
            <person name="Tonellato P.J."/>
            <person name="Twigger S."/>
            <person name="Ponting C.P."/>
            <person name="Duarte J.M."/>
            <person name="Rice S."/>
            <person name="Goodstadt L."/>
            <person name="Beatson S.A."/>
            <person name="Emes R.D."/>
            <person name="Winter E.E."/>
            <person name="Webber C."/>
            <person name="Brandt P."/>
            <person name="Nyakatura G."/>
            <person name="Adetobi M."/>
            <person name="Chiaromonte F."/>
            <person name="Elnitski L."/>
            <person name="Eswara P."/>
            <person name="Hardison R.C."/>
            <person name="Hou M."/>
            <person name="Kolbe D."/>
            <person name="Makova K."/>
            <person name="Miller W."/>
            <person name="Nekrutenko A."/>
            <person name="Riemer C."/>
            <person name="Schwartz S."/>
            <person name="Taylor J."/>
            <person name="Yang S."/>
            <person name="Zhang Y."/>
            <person name="Lindpaintner K."/>
            <person name="Andrews T.D."/>
            <person name="Caccamo M."/>
            <person name="Clamp M."/>
            <person name="Clarke L."/>
            <person name="Curwen V."/>
            <person name="Durbin R.M."/>
            <person name="Eyras E."/>
            <person name="Searle S.M."/>
            <person name="Cooper G.M."/>
            <person name="Batzoglou S."/>
            <person name="Brudno M."/>
            <person name="Sidow A."/>
            <person name="Stone E.A."/>
            <person name="Payseur B.A."/>
            <person name="Bourque G."/>
            <person name="Lopez-Otin C."/>
            <person name="Puente X.S."/>
            <person name="Chakrabarti K."/>
            <person name="Chatterji S."/>
            <person name="Dewey C."/>
            <person name="Pachter L."/>
            <person name="Bray N."/>
            <person name="Yap V.B."/>
            <person name="Caspi A."/>
            <person name="Tesler G."/>
            <person name="Pevzner P.A."/>
            <person name="Haussler D."/>
            <person name="Roskin K.M."/>
            <person name="Baertsch R."/>
            <person name="Clawson H."/>
            <person name="Furey T.S."/>
            <person name="Hinrichs A.S."/>
            <person name="Karolchik D."/>
            <person name="Kent W.J."/>
            <person name="Rosenbloom K.R."/>
            <person name="Trumbower H."/>
            <person name="Weirauch M."/>
            <person name="Cooper D.N."/>
            <person name="Stenson P.D."/>
            <person name="Ma B."/>
            <person name="Brent M."/>
            <person name="Arumugam M."/>
            <person name="Shteynberg D."/>
            <person name="Copley R.R."/>
            <person name="Taylor M.S."/>
            <person name="Riethman H."/>
            <person name="Mudunuri U."/>
            <person name="Peterson J."/>
            <person name="Guyer M."/>
            <person name="Felsenfeld A."/>
            <person name="Old S."/>
            <person name="Mockrin S."/>
            <person name="Collins F.S."/>
        </authorList>
    </citation>
    <scope>NUCLEOTIDE SEQUENCE [LARGE SCALE GENOMIC DNA]</scope>
    <source>
        <strain>Brown Norway</strain>
    </source>
</reference>
<reference key="3">
    <citation type="submission" date="2005-09" db="EMBL/GenBank/DDBJ databases">
        <authorList>
            <person name="Mural R.J."/>
            <person name="Adams M.D."/>
            <person name="Myers E.W."/>
            <person name="Smith H.O."/>
            <person name="Venter J.C."/>
        </authorList>
    </citation>
    <scope>NUCLEOTIDE SEQUENCE [LARGE SCALE GENOMIC DNA]</scope>
</reference>
<dbReference type="EMBL" id="U48246">
    <property type="protein sequence ID" value="AAC72252.1"/>
    <property type="molecule type" value="mRNA"/>
</dbReference>
<dbReference type="EMBL" id="JACYVU010000032">
    <property type="status" value="NOT_ANNOTATED_CDS"/>
    <property type="molecule type" value="Genomic_DNA"/>
</dbReference>
<dbReference type="EMBL" id="CH473979">
    <property type="protein sequence ID" value="EDM07213.1"/>
    <property type="molecule type" value="Genomic_DNA"/>
</dbReference>
<dbReference type="PIR" id="T10756">
    <property type="entry name" value="T10756"/>
</dbReference>
<dbReference type="RefSeq" id="NP_112331.2">
    <property type="nucleotide sequence ID" value="NM_031069.3"/>
</dbReference>
<dbReference type="SMR" id="Q62919"/>
<dbReference type="FunCoup" id="Q62919">
    <property type="interactions" value="319"/>
</dbReference>
<dbReference type="STRING" id="10116.ENSRNOP00000052883"/>
<dbReference type="GlyCosmos" id="Q62919">
    <property type="glycosylation" value="10 sites, No reported glycans"/>
</dbReference>
<dbReference type="GlyGen" id="Q62919">
    <property type="glycosylation" value="10 sites"/>
</dbReference>
<dbReference type="iPTMnet" id="Q62919"/>
<dbReference type="PhosphoSitePlus" id="Q62919"/>
<dbReference type="PaxDb" id="10116-ENSRNOP00000052883"/>
<dbReference type="Ensembl" id="ENSRNOT00000056030.5">
    <property type="protein sequence ID" value="ENSRNOP00000052883.4"/>
    <property type="gene ID" value="ENSRNOG00000015675.8"/>
</dbReference>
<dbReference type="GeneID" id="81733"/>
<dbReference type="KEGG" id="rno:81733"/>
<dbReference type="UCSC" id="RGD:620998">
    <property type="organism name" value="rat"/>
</dbReference>
<dbReference type="AGR" id="RGD:620998"/>
<dbReference type="CTD" id="4745"/>
<dbReference type="RGD" id="620998">
    <property type="gene designation" value="Nell1"/>
</dbReference>
<dbReference type="eggNOG" id="KOG1217">
    <property type="taxonomic scope" value="Eukaryota"/>
</dbReference>
<dbReference type="GeneTree" id="ENSGT00810000125439"/>
<dbReference type="HOGENOM" id="CLU_006887_0_0_1"/>
<dbReference type="InParanoid" id="Q62919"/>
<dbReference type="OMA" id="ATCECKT"/>
<dbReference type="OrthoDB" id="6516201at2759"/>
<dbReference type="PhylomeDB" id="Q62919"/>
<dbReference type="PRO" id="PR:Q62919"/>
<dbReference type="Proteomes" id="UP000002494">
    <property type="component" value="Chromosome 1"/>
</dbReference>
<dbReference type="Proteomes" id="UP000234681">
    <property type="component" value="Chromosome 1"/>
</dbReference>
<dbReference type="Bgee" id="ENSRNOG00000015675">
    <property type="expression patterns" value="Expressed in Ammon's horn and 12 other cell types or tissues"/>
</dbReference>
<dbReference type="GO" id="GO:0005737">
    <property type="term" value="C:cytoplasm"/>
    <property type="evidence" value="ECO:0000266"/>
    <property type="project" value="RGD"/>
</dbReference>
<dbReference type="GO" id="GO:0005615">
    <property type="term" value="C:extracellular space"/>
    <property type="evidence" value="ECO:0000314"/>
    <property type="project" value="RGD"/>
</dbReference>
<dbReference type="GO" id="GO:0005635">
    <property type="term" value="C:nuclear envelope"/>
    <property type="evidence" value="ECO:0000250"/>
    <property type="project" value="UniProtKB"/>
</dbReference>
<dbReference type="GO" id="GO:0048471">
    <property type="term" value="C:perinuclear region of cytoplasm"/>
    <property type="evidence" value="ECO:0000250"/>
    <property type="project" value="UniProtKB"/>
</dbReference>
<dbReference type="GO" id="GO:0005509">
    <property type="term" value="F:calcium ion binding"/>
    <property type="evidence" value="ECO:0007669"/>
    <property type="project" value="InterPro"/>
</dbReference>
<dbReference type="GO" id="GO:0008201">
    <property type="term" value="F:heparin binding"/>
    <property type="evidence" value="ECO:0000314"/>
    <property type="project" value="RGD"/>
</dbReference>
<dbReference type="GO" id="GO:0042802">
    <property type="term" value="F:identical protein binding"/>
    <property type="evidence" value="ECO:0000353"/>
    <property type="project" value="RGD"/>
</dbReference>
<dbReference type="GO" id="GO:0005080">
    <property type="term" value="F:protein kinase C binding"/>
    <property type="evidence" value="ECO:0000314"/>
    <property type="project" value="RGD"/>
</dbReference>
<dbReference type="GO" id="GO:0030154">
    <property type="term" value="P:cell differentiation"/>
    <property type="evidence" value="ECO:0007669"/>
    <property type="project" value="UniProtKB-KW"/>
</dbReference>
<dbReference type="GO" id="GO:0033689">
    <property type="term" value="P:negative regulation of osteoblast proliferation"/>
    <property type="evidence" value="ECO:0000250"/>
    <property type="project" value="UniProtKB"/>
</dbReference>
<dbReference type="GO" id="GO:0042177">
    <property type="term" value="P:negative regulation of protein catabolic process"/>
    <property type="evidence" value="ECO:0000250"/>
    <property type="project" value="UniProtKB"/>
</dbReference>
<dbReference type="GO" id="GO:0043065">
    <property type="term" value="P:positive regulation of apoptotic process"/>
    <property type="evidence" value="ECO:0000314"/>
    <property type="project" value="RGD"/>
</dbReference>
<dbReference type="GO" id="GO:0030501">
    <property type="term" value="P:positive regulation of bone mineralization"/>
    <property type="evidence" value="ECO:0000250"/>
    <property type="project" value="UniProtKB"/>
</dbReference>
<dbReference type="GO" id="GO:0045778">
    <property type="term" value="P:positive regulation of ossification"/>
    <property type="evidence" value="ECO:0000315"/>
    <property type="project" value="RGD"/>
</dbReference>
<dbReference type="GO" id="GO:0045669">
    <property type="term" value="P:positive regulation of osteoblast differentiation"/>
    <property type="evidence" value="ECO:0000250"/>
    <property type="project" value="UniProtKB"/>
</dbReference>
<dbReference type="GO" id="GO:0010468">
    <property type="term" value="P:regulation of gene expression"/>
    <property type="evidence" value="ECO:0000250"/>
    <property type="project" value="UniProtKB"/>
</dbReference>
<dbReference type="GO" id="GO:0045667">
    <property type="term" value="P:regulation of osteoblast differentiation"/>
    <property type="evidence" value="ECO:0000315"/>
    <property type="project" value="RGD"/>
</dbReference>
<dbReference type="CDD" id="cd00054">
    <property type="entry name" value="EGF_CA"/>
    <property type="match status" value="4"/>
</dbReference>
<dbReference type="CDD" id="cd00110">
    <property type="entry name" value="LamG"/>
    <property type="match status" value="1"/>
</dbReference>
<dbReference type="FunFam" id="2.10.25.10:FF:000121">
    <property type="entry name" value="Neural EGFL like 2"/>
    <property type="match status" value="1"/>
</dbReference>
<dbReference type="FunFam" id="2.10.25.10:FF:000120">
    <property type="entry name" value="Protein kinase C-binding protein NELL1"/>
    <property type="match status" value="1"/>
</dbReference>
<dbReference type="FunFam" id="2.10.25.10:FF:000211">
    <property type="entry name" value="Protein kinase C-binding protein NELL1"/>
    <property type="match status" value="1"/>
</dbReference>
<dbReference type="FunFam" id="2.10.25.10:FF:000221">
    <property type="entry name" value="Protein kinase C-binding protein NELL1"/>
    <property type="match status" value="1"/>
</dbReference>
<dbReference type="FunFam" id="2.60.120.200:FF:000015">
    <property type="entry name" value="protein kinase C-binding protein NELL1"/>
    <property type="match status" value="1"/>
</dbReference>
<dbReference type="FunFam" id="2.10.25.10:FF:000102">
    <property type="entry name" value="Protein kinase C-binding protein NELL2"/>
    <property type="match status" value="1"/>
</dbReference>
<dbReference type="FunFam" id="2.10.25.10:FF:000111">
    <property type="entry name" value="Protein kinase C-binding protein NELL2"/>
    <property type="match status" value="1"/>
</dbReference>
<dbReference type="FunFam" id="2.10.70.10:FF:000023">
    <property type="entry name" value="protein kinase C-binding protein NELL2"/>
    <property type="match status" value="1"/>
</dbReference>
<dbReference type="Gene3D" id="2.60.120.200">
    <property type="match status" value="1"/>
</dbReference>
<dbReference type="Gene3D" id="6.20.200.20">
    <property type="match status" value="2"/>
</dbReference>
<dbReference type="Gene3D" id="2.10.70.10">
    <property type="entry name" value="Complement Module, domain 1"/>
    <property type="match status" value="1"/>
</dbReference>
<dbReference type="Gene3D" id="2.10.25.10">
    <property type="entry name" value="Laminin"/>
    <property type="match status" value="6"/>
</dbReference>
<dbReference type="InterPro" id="IPR013320">
    <property type="entry name" value="ConA-like_dom_sf"/>
</dbReference>
<dbReference type="InterPro" id="IPR001881">
    <property type="entry name" value="EGF-like_Ca-bd_dom"/>
</dbReference>
<dbReference type="InterPro" id="IPR000742">
    <property type="entry name" value="EGF-like_dom"/>
</dbReference>
<dbReference type="InterPro" id="IPR000152">
    <property type="entry name" value="EGF-type_Asp/Asn_hydroxyl_site"/>
</dbReference>
<dbReference type="InterPro" id="IPR018097">
    <property type="entry name" value="EGF_Ca-bd_CS"/>
</dbReference>
<dbReference type="InterPro" id="IPR024731">
    <property type="entry name" value="EGF_dom"/>
</dbReference>
<dbReference type="InterPro" id="IPR009030">
    <property type="entry name" value="Growth_fac_rcpt_cys_sf"/>
</dbReference>
<dbReference type="InterPro" id="IPR001791">
    <property type="entry name" value="Laminin_G"/>
</dbReference>
<dbReference type="InterPro" id="IPR049883">
    <property type="entry name" value="NOTCH1_EGF-like"/>
</dbReference>
<dbReference type="InterPro" id="IPR051586">
    <property type="entry name" value="PKC-binding_NELL"/>
</dbReference>
<dbReference type="InterPro" id="IPR048287">
    <property type="entry name" value="TSPN-like_N"/>
</dbReference>
<dbReference type="InterPro" id="IPR001007">
    <property type="entry name" value="VWF_dom"/>
</dbReference>
<dbReference type="PANTHER" id="PTHR24042">
    <property type="entry name" value="NEL HOMOLOG"/>
    <property type="match status" value="1"/>
</dbReference>
<dbReference type="PANTHER" id="PTHR24042:SF2">
    <property type="entry name" value="PROTEIN KINASE C-BINDING PROTEIN NELL1"/>
    <property type="match status" value="1"/>
</dbReference>
<dbReference type="Pfam" id="PF12947">
    <property type="entry name" value="EGF_3"/>
    <property type="match status" value="1"/>
</dbReference>
<dbReference type="Pfam" id="PF07645">
    <property type="entry name" value="EGF_CA"/>
    <property type="match status" value="3"/>
</dbReference>
<dbReference type="Pfam" id="PF02210">
    <property type="entry name" value="Laminin_G_2"/>
    <property type="match status" value="1"/>
</dbReference>
<dbReference type="Pfam" id="PF00093">
    <property type="entry name" value="VWC"/>
    <property type="match status" value="2"/>
</dbReference>
<dbReference type="SMART" id="SM00181">
    <property type="entry name" value="EGF"/>
    <property type="match status" value="6"/>
</dbReference>
<dbReference type="SMART" id="SM00179">
    <property type="entry name" value="EGF_CA"/>
    <property type="match status" value="5"/>
</dbReference>
<dbReference type="SMART" id="SM00282">
    <property type="entry name" value="LamG"/>
    <property type="match status" value="1"/>
</dbReference>
<dbReference type="SMART" id="SM00210">
    <property type="entry name" value="TSPN"/>
    <property type="match status" value="1"/>
</dbReference>
<dbReference type="SMART" id="SM00214">
    <property type="entry name" value="VWC"/>
    <property type="match status" value="4"/>
</dbReference>
<dbReference type="SMART" id="SM00215">
    <property type="entry name" value="VWC_out"/>
    <property type="match status" value="2"/>
</dbReference>
<dbReference type="SUPFAM" id="SSF49899">
    <property type="entry name" value="Concanavalin A-like lectins/glucanases"/>
    <property type="match status" value="1"/>
</dbReference>
<dbReference type="SUPFAM" id="SSF57196">
    <property type="entry name" value="EGF/Laminin"/>
    <property type="match status" value="2"/>
</dbReference>
<dbReference type="SUPFAM" id="SSF57603">
    <property type="entry name" value="FnI-like domain"/>
    <property type="match status" value="3"/>
</dbReference>
<dbReference type="SUPFAM" id="SSF57184">
    <property type="entry name" value="Growth factor receptor domain"/>
    <property type="match status" value="1"/>
</dbReference>
<dbReference type="PROSITE" id="PS00010">
    <property type="entry name" value="ASX_HYDROXYL"/>
    <property type="match status" value="3"/>
</dbReference>
<dbReference type="PROSITE" id="PS00022">
    <property type="entry name" value="EGF_1"/>
    <property type="match status" value="1"/>
</dbReference>
<dbReference type="PROSITE" id="PS01186">
    <property type="entry name" value="EGF_2"/>
    <property type="match status" value="3"/>
</dbReference>
<dbReference type="PROSITE" id="PS50026">
    <property type="entry name" value="EGF_3"/>
    <property type="match status" value="5"/>
</dbReference>
<dbReference type="PROSITE" id="PS01187">
    <property type="entry name" value="EGF_CA"/>
    <property type="match status" value="3"/>
</dbReference>
<dbReference type="PROSITE" id="PS01208">
    <property type="entry name" value="VWFC_1"/>
    <property type="match status" value="2"/>
</dbReference>
<dbReference type="PROSITE" id="PS50184">
    <property type="entry name" value="VWFC_2"/>
    <property type="match status" value="2"/>
</dbReference>
<gene>
    <name type="primary">Nell1</name>
</gene>
<comment type="function">
    <text evidence="1">Plays a role in the control of cell growth and differentiation. Promotes osteoblast cell differentiation and terminal mineralization.</text>
</comment>
<comment type="subunit">
    <text evidence="1 2 6">Interacts with ATRAID; the interaction promotes osteoblast cell differentiation and mineralization (By similarity). Homotrimer (PubMed:10548494). Binds to PKC beta-1 (PubMed:10548494). Interacts with ROBO3 (By similarity).</text>
</comment>
<comment type="subcellular location">
    <subcellularLocation>
        <location evidence="1">Cytoplasm</location>
    </subcellularLocation>
    <subcellularLocation>
        <location evidence="1">Nucleus envelope</location>
    </subcellularLocation>
    <subcellularLocation>
        <location evidence="6">Secreted</location>
    </subcellularLocation>
    <text evidence="1">Colocalizes with ATRAID on the nuclear envelope and the perinuclear region.</text>
</comment>
<comment type="miscellaneous">
    <text evidence="1">It has been demonstrated that ROBO3 binds to both NELL1 and NELL2. However, NELL1 is not expressed in the spinal cord at the time of commissural axon growth to the midline and has no significant effect on commissural axon repulsion in vitro, suggesting that NELL1 is not a functional ligand for ROBO3 in commissural axons. It remains possible, however, that NELL1 functions as a ligand for ROBO3 at another spatiotemporal location.</text>
</comment>
<sequence>MPMDVILVLWFCVCTARTVLGFGMDPDLQLDIISELDLVNTTLGVTQVAGLHNASKAFLFQDVQREIHSAPHVSEKLIQLFRNKSEFTFLATVQQKPSTSGVILSIRELEHSYFELESSGPREEIRYHYIHGGKPRTEALPYRMADGQWHKVALSVSASHLLLHIDCNRIYERVIDPPETNLPPGSNLWLGQRNQKHGFFKGIIQDGKIIFMPNGFITQCPNLNRTCPTCSDFLSLVQGIMDLQELLAKMTAKLNYAETRLGQLENCHCEKTCQVSGLLYRDQDSWVDGDNCRNCTCKSGAVECRRMSCPPLNCSPDSLPVHISGQCCKVCRPKCIYGGKVLAEGQRILTKTCRECRGGVLVKITEACPPLNCSAKDHILPENQCCRVCPGHNFCAEAPKCGENSECKNWNTKATCECKNGYISVQGNSAYCEDIDECAAKMHYCHANTVCVNLPGLYRCDCVPGYIRVDDFSCTEHDDCGSGQHNCDKNAICTNTVQGHSCTCQPGYVGNGTICKAFCEEGCRYGGTCVAPNKCVCPSGFTGSHCEKDIDECAEGFVECHNHSRCVNLPGWYHCECRSGFHDDGTYSLSGESCIDIDECALRTHTCWNDSACINLAGGFDCLCPSGPSCSGDCPHEGGLKHNGQVWILREDRCSVCSCKDGKIFCRRTACDCQNPNVDLFCCPECDTRVTSQCLDQSGQKLYRSGDNWTHSCQQCRCLEGEADCWPLACPSLGCEYTAMFEGECCPRCVSDPCLADNIAYDIRKTCLDSFGVSRLSGAVWTMAGSPCTTCKCKNGRVCCSVDLECIENN</sequence>
<proteinExistence type="evidence at protein level"/>
<protein>
    <recommendedName>
        <fullName>Protein kinase C-binding protein NELL1</fullName>
    </recommendedName>
    <alternativeName>
        <fullName>NEL-like protein 1</fullName>
    </alternativeName>
</protein>
<feature type="signal peptide" evidence="3">
    <location>
        <begin position="1"/>
        <end position="21"/>
    </location>
</feature>
<feature type="chain" id="PRO_0000007665" description="Protein kinase C-binding protein NELL1">
    <location>
        <begin position="22"/>
        <end position="810"/>
    </location>
</feature>
<feature type="domain" description="Laminin G-like">
    <location>
        <begin position="57"/>
        <end position="227"/>
    </location>
</feature>
<feature type="domain" description="VWFC 1" evidence="5">
    <location>
        <begin position="271"/>
        <end position="332"/>
    </location>
</feature>
<feature type="domain" description="EGF-like 1; calcium-binding" evidence="4">
    <location>
        <begin position="434"/>
        <end position="475"/>
    </location>
</feature>
<feature type="domain" description="EGF-like 2; calcium-binding" evidence="4">
    <location>
        <begin position="476"/>
        <end position="516"/>
    </location>
</feature>
<feature type="domain" description="EGF-like 3" evidence="4">
    <location>
        <begin position="517"/>
        <end position="547"/>
    </location>
</feature>
<feature type="domain" description="EGF-like 4; calcium-binding" evidence="4">
    <location>
        <begin position="549"/>
        <end position="587"/>
    </location>
</feature>
<feature type="domain" description="EGF-like 5; calcium-binding" evidence="4">
    <location>
        <begin position="596"/>
        <end position="631"/>
    </location>
</feature>
<feature type="domain" description="VWFC 2" evidence="5">
    <location>
        <begin position="632"/>
        <end position="687"/>
    </location>
</feature>
<feature type="domain" description="VWFC 3" evidence="5">
    <location>
        <begin position="692"/>
        <end position="750"/>
    </location>
</feature>
<feature type="binding site" evidence="1">
    <location>
        <position position="434"/>
    </location>
    <ligand>
        <name>Ca(2+)</name>
        <dbReference type="ChEBI" id="CHEBI:29108"/>
    </ligand>
</feature>
<feature type="binding site" evidence="1">
    <location>
        <position position="435"/>
    </location>
    <ligand>
        <name>Ca(2+)</name>
        <dbReference type="ChEBI" id="CHEBI:29108"/>
    </ligand>
</feature>
<feature type="binding site" evidence="1">
    <location>
        <position position="437"/>
    </location>
    <ligand>
        <name>Ca(2+)</name>
        <dbReference type="ChEBI" id="CHEBI:29108"/>
    </ligand>
</feature>
<feature type="binding site" evidence="1">
    <location>
        <position position="453"/>
    </location>
    <ligand>
        <name>Ca(2+)</name>
        <dbReference type="ChEBI" id="CHEBI:29108"/>
    </ligand>
</feature>
<feature type="binding site" evidence="1">
    <location>
        <position position="454"/>
    </location>
    <ligand>
        <name>Ca(2+)</name>
        <dbReference type="ChEBI" id="CHEBI:29108"/>
    </ligand>
</feature>
<feature type="binding site" evidence="1">
    <location>
        <position position="457"/>
    </location>
    <ligand>
        <name>Ca(2+)</name>
        <dbReference type="ChEBI" id="CHEBI:29108"/>
    </ligand>
</feature>
<feature type="glycosylation site" description="N-linked (GlcNAc...) asparagine" evidence="3">
    <location>
        <position position="40"/>
    </location>
</feature>
<feature type="glycosylation site" description="N-linked (GlcNAc...) asparagine" evidence="3">
    <location>
        <position position="53"/>
    </location>
</feature>
<feature type="glycosylation site" description="N-linked (GlcNAc...) asparagine" evidence="3">
    <location>
        <position position="83"/>
    </location>
</feature>
<feature type="glycosylation site" description="N-linked (GlcNAc...) asparagine" evidence="3">
    <location>
        <position position="224"/>
    </location>
</feature>
<feature type="glycosylation site" description="N-linked (GlcNAc...) asparagine" evidence="3">
    <location>
        <position position="294"/>
    </location>
</feature>
<feature type="glycosylation site" description="N-linked (GlcNAc...) asparagine" evidence="3">
    <location>
        <position position="372"/>
    </location>
</feature>
<feature type="glycosylation site" description="N-linked (GlcNAc...) asparagine" evidence="1">
    <location>
        <position position="511"/>
    </location>
</feature>
<feature type="glycosylation site" description="N-linked (GlcNAc...) asparagine" evidence="3">
    <location>
        <position position="562"/>
    </location>
</feature>
<feature type="glycosylation site" description="N-linked (GlcNAc...) asparagine" evidence="3">
    <location>
        <position position="609"/>
    </location>
</feature>
<feature type="glycosylation site" description="N-linked (GlcNAc...) asparagine" evidence="3">
    <location>
        <position position="708"/>
    </location>
</feature>
<feature type="disulfide bond" evidence="1">
    <location>
        <begin position="395"/>
        <end position="407"/>
    </location>
</feature>
<feature type="disulfide bond" evidence="1">
    <location>
        <begin position="401"/>
        <end position="416"/>
    </location>
</feature>
<feature type="disulfide bond" evidence="1">
    <location>
        <begin position="418"/>
        <end position="432"/>
    </location>
</feature>
<feature type="disulfide bond" evidence="1">
    <location>
        <begin position="438"/>
        <end position="451"/>
    </location>
</feature>
<feature type="disulfide bond" evidence="1">
    <location>
        <begin position="445"/>
        <end position="460"/>
    </location>
</feature>
<feature type="disulfide bond" evidence="1">
    <location>
        <begin position="462"/>
        <end position="474"/>
    </location>
</feature>
<feature type="disulfide bond" evidence="1">
    <location>
        <begin position="480"/>
        <end position="493"/>
    </location>
</feature>
<feature type="disulfide bond" evidence="1">
    <location>
        <begin position="487"/>
        <end position="502"/>
    </location>
</feature>
<feature type="disulfide bond" evidence="1">
    <location>
        <begin position="504"/>
        <end position="515"/>
    </location>
</feature>
<feature type="disulfide bond" evidence="4">
    <location>
        <begin position="519"/>
        <end position="529"/>
    </location>
</feature>
<feature type="disulfide bond" evidence="4">
    <location>
        <begin position="523"/>
        <end position="535"/>
    </location>
</feature>
<feature type="disulfide bond" evidence="4">
    <location>
        <begin position="537"/>
        <end position="546"/>
    </location>
</feature>
<feature type="disulfide bond" evidence="4">
    <location>
        <begin position="553"/>
        <end position="566"/>
    </location>
</feature>
<feature type="disulfide bond" evidence="4">
    <location>
        <begin position="560"/>
        <end position="575"/>
    </location>
</feature>
<feature type="disulfide bond" evidence="4">
    <location>
        <begin position="577"/>
        <end position="594"/>
    </location>
</feature>
<feature type="disulfide bond" evidence="4">
    <location>
        <begin position="600"/>
        <end position="613"/>
    </location>
</feature>
<feature type="disulfide bond" evidence="4">
    <location>
        <begin position="607"/>
        <end position="622"/>
    </location>
</feature>
<feature type="disulfide bond" evidence="4">
    <location>
        <begin position="624"/>
        <end position="630"/>
    </location>
</feature>
<feature type="sequence conflict" description="In Ref. 1; AAC72252." evidence="7" ref="1">
    <original>R</original>
    <variation>G</variation>
    <location>
        <position position="293"/>
    </location>
</feature>
<feature type="sequence conflict" description="In Ref. 1; AAC72252." evidence="7" ref="1">
    <original>H</original>
    <variation>Y</variation>
    <location>
        <position position="563"/>
    </location>
</feature>
<feature type="sequence conflict" description="In Ref. 1; AAC72252." evidence="7" ref="1">
    <original>D</original>
    <variation>G</variation>
    <location>
        <position position="757"/>
    </location>
</feature>
<organism>
    <name type="scientific">Rattus norvegicus</name>
    <name type="common">Rat</name>
    <dbReference type="NCBI Taxonomy" id="10116"/>
    <lineage>
        <taxon>Eukaryota</taxon>
        <taxon>Metazoa</taxon>
        <taxon>Chordata</taxon>
        <taxon>Craniata</taxon>
        <taxon>Vertebrata</taxon>
        <taxon>Euteleostomi</taxon>
        <taxon>Mammalia</taxon>
        <taxon>Eutheria</taxon>
        <taxon>Euarchontoglires</taxon>
        <taxon>Glires</taxon>
        <taxon>Rodentia</taxon>
        <taxon>Myomorpha</taxon>
        <taxon>Muroidea</taxon>
        <taxon>Muridae</taxon>
        <taxon>Murinae</taxon>
        <taxon>Rattus</taxon>
    </lineage>
</organism>
<name>NELL1_RAT</name>
<accession>Q62919</accession>
<accession>A6JBG8</accession>
<accession>D4A284</accession>
<evidence type="ECO:0000250" key="1">
    <source>
        <dbReference type="UniProtKB" id="Q92832"/>
    </source>
</evidence>
<evidence type="ECO:0000250" key="2">
    <source>
        <dbReference type="UniProtKB" id="Q9Z2I4"/>
    </source>
</evidence>
<evidence type="ECO:0000255" key="3"/>
<evidence type="ECO:0000255" key="4">
    <source>
        <dbReference type="PROSITE-ProRule" id="PRU00076"/>
    </source>
</evidence>
<evidence type="ECO:0000255" key="5">
    <source>
        <dbReference type="PROSITE-ProRule" id="PRU00220"/>
    </source>
</evidence>
<evidence type="ECO:0000269" key="6">
    <source>
    </source>
</evidence>
<evidence type="ECO:0000305" key="7"/>